<name>ATPF_BARVE</name>
<evidence type="ECO:0000255" key="1">
    <source>
        <dbReference type="HAMAP-Rule" id="MF_01398"/>
    </source>
</evidence>
<reference key="1">
    <citation type="submission" date="2007-03" db="EMBL/GenBank/DDBJ databases">
        <title>Sequencing analysis of Barbarea verna chloroplast DNA.</title>
        <authorList>
            <person name="Hosouchi T."/>
            <person name="Tsuruoka H."/>
            <person name="Kotani H."/>
        </authorList>
    </citation>
    <scope>NUCLEOTIDE SEQUENCE [LARGE SCALE GENOMIC DNA]</scope>
</reference>
<gene>
    <name evidence="1" type="primary">atpF</name>
</gene>
<organism>
    <name type="scientific">Barbarea verna</name>
    <name type="common">Land cress</name>
    <name type="synonym">Erysimum vernum</name>
    <dbReference type="NCBI Taxonomy" id="50458"/>
    <lineage>
        <taxon>Eukaryota</taxon>
        <taxon>Viridiplantae</taxon>
        <taxon>Streptophyta</taxon>
        <taxon>Embryophyta</taxon>
        <taxon>Tracheophyta</taxon>
        <taxon>Spermatophyta</taxon>
        <taxon>Magnoliopsida</taxon>
        <taxon>eudicotyledons</taxon>
        <taxon>Gunneridae</taxon>
        <taxon>Pentapetalae</taxon>
        <taxon>rosids</taxon>
        <taxon>malvids</taxon>
        <taxon>Brassicales</taxon>
        <taxon>Brassicaceae</taxon>
        <taxon>Cardamineae</taxon>
        <taxon>Barbarea</taxon>
    </lineage>
</organism>
<proteinExistence type="inferred from homology"/>
<feature type="chain" id="PRO_0000368908" description="ATP synthase subunit b, chloroplastic">
    <location>
        <begin position="1"/>
        <end position="184"/>
    </location>
</feature>
<feature type="transmembrane region" description="Helical" evidence="1">
    <location>
        <begin position="27"/>
        <end position="49"/>
    </location>
</feature>
<sequence>MKNLTDSFVYLGHWPSAGSFGFNTDILATNPINLSVVFGVLIFFGKGVLNDLLDNRKQRILNTIRNSEELREGAIQQLENARARLRKVETEADQFRVNGYSEIEREKLNLINSTYKTLKQLENYKNETILFEQQRTINQVRERVFQQALQGAIGTLNSCLSHELHLRTINANIGMFGTMKEITD</sequence>
<dbReference type="EMBL" id="AP009370">
    <property type="protein sequence ID" value="BAF50096.1"/>
    <property type="molecule type" value="Genomic_DNA"/>
</dbReference>
<dbReference type="RefSeq" id="YP_001123272.1">
    <property type="nucleotide sequence ID" value="NC_009269.1"/>
</dbReference>
<dbReference type="SMR" id="A4QK91"/>
<dbReference type="GeneID" id="4961945"/>
<dbReference type="GO" id="GO:0009535">
    <property type="term" value="C:chloroplast thylakoid membrane"/>
    <property type="evidence" value="ECO:0007669"/>
    <property type="project" value="UniProtKB-SubCell"/>
</dbReference>
<dbReference type="GO" id="GO:0045259">
    <property type="term" value="C:proton-transporting ATP synthase complex"/>
    <property type="evidence" value="ECO:0007669"/>
    <property type="project" value="UniProtKB-KW"/>
</dbReference>
<dbReference type="GO" id="GO:0046933">
    <property type="term" value="F:proton-transporting ATP synthase activity, rotational mechanism"/>
    <property type="evidence" value="ECO:0007669"/>
    <property type="project" value="UniProtKB-UniRule"/>
</dbReference>
<dbReference type="CDD" id="cd06503">
    <property type="entry name" value="ATP-synt_Fo_b"/>
    <property type="match status" value="1"/>
</dbReference>
<dbReference type="HAMAP" id="MF_01398">
    <property type="entry name" value="ATP_synth_b_bprime"/>
    <property type="match status" value="1"/>
</dbReference>
<dbReference type="InterPro" id="IPR002146">
    <property type="entry name" value="ATP_synth_b/b'su_bac/chlpt"/>
</dbReference>
<dbReference type="PANTHER" id="PTHR34264">
    <property type="entry name" value="ATP SYNTHASE SUBUNIT B, CHLOROPLASTIC"/>
    <property type="match status" value="1"/>
</dbReference>
<dbReference type="PANTHER" id="PTHR34264:SF3">
    <property type="entry name" value="ATP SYNTHASE SUBUNIT B, CHLOROPLASTIC"/>
    <property type="match status" value="1"/>
</dbReference>
<dbReference type="Pfam" id="PF00430">
    <property type="entry name" value="ATP-synt_B"/>
    <property type="match status" value="1"/>
</dbReference>
<comment type="function">
    <text evidence="1">F(1)F(0) ATP synthase produces ATP from ADP in the presence of a proton or sodium gradient. F-type ATPases consist of two structural domains, F(1) containing the extramembraneous catalytic core and F(0) containing the membrane proton channel, linked together by a central stalk and a peripheral stalk. During catalysis, ATP synthesis in the catalytic domain of F(1) is coupled via a rotary mechanism of the central stalk subunits to proton translocation.</text>
</comment>
<comment type="function">
    <text evidence="1">Component of the F(0) channel, it forms part of the peripheral stalk, linking F(1) to F(0).</text>
</comment>
<comment type="subunit">
    <text evidence="1">F-type ATPases have 2 components, F(1) - the catalytic core - and F(0) - the membrane proton channel. F(1) has five subunits: alpha(3), beta(3), gamma(1), delta(1), epsilon(1). F(0) has four main subunits: a(1), b(1), b'(1) and c(10-14). The alpha and beta chains form an alternating ring which encloses part of the gamma chain. F(1) is attached to F(0) by a central stalk formed by the gamma and epsilon chains, while a peripheral stalk is formed by the delta, b and b' chains.</text>
</comment>
<comment type="subcellular location">
    <subcellularLocation>
        <location evidence="1">Plastid</location>
        <location evidence="1">Chloroplast thylakoid membrane</location>
        <topology evidence="1">Single-pass membrane protein</topology>
    </subcellularLocation>
</comment>
<comment type="miscellaneous">
    <text>In plastids the F-type ATPase is also known as CF(1)CF(0).</text>
</comment>
<comment type="similarity">
    <text evidence="1">Belongs to the ATPase B chain family.</text>
</comment>
<keyword id="KW-0066">ATP synthesis</keyword>
<keyword id="KW-0138">CF(0)</keyword>
<keyword id="KW-0150">Chloroplast</keyword>
<keyword id="KW-0375">Hydrogen ion transport</keyword>
<keyword id="KW-0406">Ion transport</keyword>
<keyword id="KW-0472">Membrane</keyword>
<keyword id="KW-0934">Plastid</keyword>
<keyword id="KW-0793">Thylakoid</keyword>
<keyword id="KW-0812">Transmembrane</keyword>
<keyword id="KW-1133">Transmembrane helix</keyword>
<keyword id="KW-0813">Transport</keyword>
<geneLocation type="chloroplast"/>
<accession>A4QK91</accession>
<protein>
    <recommendedName>
        <fullName evidence="1">ATP synthase subunit b, chloroplastic</fullName>
    </recommendedName>
    <alternativeName>
        <fullName evidence="1">ATP synthase F(0) sector subunit b</fullName>
    </alternativeName>
    <alternativeName>
        <fullName evidence="1">ATPase subunit I</fullName>
    </alternativeName>
</protein>